<accession>Q4L752</accession>
<proteinExistence type="inferred from homology"/>
<keyword id="KW-0067">ATP-binding</keyword>
<keyword id="KW-0963">Cytoplasm</keyword>
<keyword id="KW-0418">Kinase</keyword>
<keyword id="KW-0460">Magnesium</keyword>
<keyword id="KW-0479">Metal-binding</keyword>
<keyword id="KW-0547">Nucleotide-binding</keyword>
<keyword id="KW-0808">Transferase</keyword>
<organism>
    <name type="scientific">Staphylococcus haemolyticus (strain JCSC1435)</name>
    <dbReference type="NCBI Taxonomy" id="279808"/>
    <lineage>
        <taxon>Bacteria</taxon>
        <taxon>Bacillati</taxon>
        <taxon>Bacillota</taxon>
        <taxon>Bacilli</taxon>
        <taxon>Bacillales</taxon>
        <taxon>Staphylococcaceae</taxon>
        <taxon>Staphylococcus</taxon>
    </lineage>
</organism>
<gene>
    <name evidence="1" type="primary">ackA</name>
    <name type="ordered locus">SH1214</name>
</gene>
<protein>
    <recommendedName>
        <fullName evidence="1">Acetate kinase</fullName>
        <ecNumber evidence="1">2.7.2.1</ecNumber>
    </recommendedName>
    <alternativeName>
        <fullName evidence="1">Acetokinase</fullName>
    </alternativeName>
</protein>
<name>ACKA_STAHJ</name>
<comment type="function">
    <text evidence="1">Catalyzes the formation of acetyl phosphate from acetate and ATP. Can also catalyze the reverse reaction.</text>
</comment>
<comment type="catalytic activity">
    <reaction evidence="1">
        <text>acetate + ATP = acetyl phosphate + ADP</text>
        <dbReference type="Rhea" id="RHEA:11352"/>
        <dbReference type="ChEBI" id="CHEBI:22191"/>
        <dbReference type="ChEBI" id="CHEBI:30089"/>
        <dbReference type="ChEBI" id="CHEBI:30616"/>
        <dbReference type="ChEBI" id="CHEBI:456216"/>
        <dbReference type="EC" id="2.7.2.1"/>
    </reaction>
</comment>
<comment type="cofactor">
    <cofactor evidence="1">
        <name>Mg(2+)</name>
        <dbReference type="ChEBI" id="CHEBI:18420"/>
    </cofactor>
    <cofactor evidence="1">
        <name>Mn(2+)</name>
        <dbReference type="ChEBI" id="CHEBI:29035"/>
    </cofactor>
    <text evidence="1">Mg(2+). Can also accept Mn(2+).</text>
</comment>
<comment type="pathway">
    <text evidence="1">Metabolic intermediate biosynthesis; acetyl-CoA biosynthesis; acetyl-CoA from acetate: step 1/2.</text>
</comment>
<comment type="subunit">
    <text evidence="1">Homodimer.</text>
</comment>
<comment type="subcellular location">
    <subcellularLocation>
        <location evidence="1">Cytoplasm</location>
    </subcellularLocation>
</comment>
<comment type="similarity">
    <text evidence="1">Belongs to the acetokinase family.</text>
</comment>
<dbReference type="EC" id="2.7.2.1" evidence="1"/>
<dbReference type="EMBL" id="AP006716">
    <property type="protein sequence ID" value="BAE04523.1"/>
    <property type="molecule type" value="Genomic_DNA"/>
</dbReference>
<dbReference type="RefSeq" id="WP_011275513.1">
    <property type="nucleotide sequence ID" value="NC_007168.1"/>
</dbReference>
<dbReference type="SMR" id="Q4L752"/>
<dbReference type="KEGG" id="sha:SH1214"/>
<dbReference type="eggNOG" id="COG0282">
    <property type="taxonomic scope" value="Bacteria"/>
</dbReference>
<dbReference type="HOGENOM" id="CLU_020352_0_1_9"/>
<dbReference type="OrthoDB" id="9802453at2"/>
<dbReference type="UniPathway" id="UPA00340">
    <property type="reaction ID" value="UER00458"/>
</dbReference>
<dbReference type="Proteomes" id="UP000000543">
    <property type="component" value="Chromosome"/>
</dbReference>
<dbReference type="GO" id="GO:0005737">
    <property type="term" value="C:cytoplasm"/>
    <property type="evidence" value="ECO:0007669"/>
    <property type="project" value="UniProtKB-SubCell"/>
</dbReference>
<dbReference type="GO" id="GO:0008776">
    <property type="term" value="F:acetate kinase activity"/>
    <property type="evidence" value="ECO:0007669"/>
    <property type="project" value="UniProtKB-UniRule"/>
</dbReference>
<dbReference type="GO" id="GO:0005524">
    <property type="term" value="F:ATP binding"/>
    <property type="evidence" value="ECO:0007669"/>
    <property type="project" value="UniProtKB-KW"/>
</dbReference>
<dbReference type="GO" id="GO:0000287">
    <property type="term" value="F:magnesium ion binding"/>
    <property type="evidence" value="ECO:0007669"/>
    <property type="project" value="UniProtKB-UniRule"/>
</dbReference>
<dbReference type="GO" id="GO:0006083">
    <property type="term" value="P:acetate metabolic process"/>
    <property type="evidence" value="ECO:0007669"/>
    <property type="project" value="TreeGrafter"/>
</dbReference>
<dbReference type="GO" id="GO:0006085">
    <property type="term" value="P:acetyl-CoA biosynthetic process"/>
    <property type="evidence" value="ECO:0007669"/>
    <property type="project" value="UniProtKB-UniRule"/>
</dbReference>
<dbReference type="CDD" id="cd24010">
    <property type="entry name" value="ASKHA_NBD_AcK_PK"/>
    <property type="match status" value="1"/>
</dbReference>
<dbReference type="Gene3D" id="3.30.420.40">
    <property type="match status" value="2"/>
</dbReference>
<dbReference type="HAMAP" id="MF_00020">
    <property type="entry name" value="Acetate_kinase"/>
    <property type="match status" value="1"/>
</dbReference>
<dbReference type="InterPro" id="IPR004372">
    <property type="entry name" value="Ac/propionate_kinase"/>
</dbReference>
<dbReference type="InterPro" id="IPR000890">
    <property type="entry name" value="Aliphatic_acid_kin_short-chain"/>
</dbReference>
<dbReference type="InterPro" id="IPR023865">
    <property type="entry name" value="Aliphatic_acid_kinase_CS"/>
</dbReference>
<dbReference type="InterPro" id="IPR043129">
    <property type="entry name" value="ATPase_NBD"/>
</dbReference>
<dbReference type="NCBIfam" id="TIGR00016">
    <property type="entry name" value="ackA"/>
    <property type="match status" value="1"/>
</dbReference>
<dbReference type="PANTHER" id="PTHR21060">
    <property type="entry name" value="ACETATE KINASE"/>
    <property type="match status" value="1"/>
</dbReference>
<dbReference type="PANTHER" id="PTHR21060:SF15">
    <property type="entry name" value="ACETATE KINASE-RELATED"/>
    <property type="match status" value="1"/>
</dbReference>
<dbReference type="Pfam" id="PF00871">
    <property type="entry name" value="Acetate_kinase"/>
    <property type="match status" value="1"/>
</dbReference>
<dbReference type="PIRSF" id="PIRSF000722">
    <property type="entry name" value="Acetate_prop_kin"/>
    <property type="match status" value="1"/>
</dbReference>
<dbReference type="PRINTS" id="PR00471">
    <property type="entry name" value="ACETATEKNASE"/>
</dbReference>
<dbReference type="SUPFAM" id="SSF53067">
    <property type="entry name" value="Actin-like ATPase domain"/>
    <property type="match status" value="2"/>
</dbReference>
<dbReference type="PROSITE" id="PS01075">
    <property type="entry name" value="ACETATE_KINASE_1"/>
    <property type="match status" value="1"/>
</dbReference>
<dbReference type="PROSITE" id="PS01076">
    <property type="entry name" value="ACETATE_KINASE_2"/>
    <property type="match status" value="1"/>
</dbReference>
<evidence type="ECO:0000255" key="1">
    <source>
        <dbReference type="HAMAP-Rule" id="MF_00020"/>
    </source>
</evidence>
<reference key="1">
    <citation type="journal article" date="2005" name="J. Bacteriol.">
        <title>Whole-genome sequencing of Staphylococcus haemolyticus uncovers the extreme plasticity of its genome and the evolution of human-colonizing staphylococcal species.</title>
        <authorList>
            <person name="Takeuchi F."/>
            <person name="Watanabe S."/>
            <person name="Baba T."/>
            <person name="Yuzawa H."/>
            <person name="Ito T."/>
            <person name="Morimoto Y."/>
            <person name="Kuroda M."/>
            <person name="Cui L."/>
            <person name="Takahashi M."/>
            <person name="Ankai A."/>
            <person name="Baba S."/>
            <person name="Fukui S."/>
            <person name="Lee J.C."/>
            <person name="Hiramatsu K."/>
        </authorList>
    </citation>
    <scope>NUCLEOTIDE SEQUENCE [LARGE SCALE GENOMIC DNA]</scope>
    <source>
        <strain>JCSC1435</strain>
    </source>
</reference>
<feature type="chain" id="PRO_1000002266" description="Acetate kinase">
    <location>
        <begin position="1"/>
        <end position="398"/>
    </location>
</feature>
<feature type="active site" description="Proton donor/acceptor" evidence="1">
    <location>
        <position position="147"/>
    </location>
</feature>
<feature type="binding site" evidence="1">
    <location>
        <position position="9"/>
    </location>
    <ligand>
        <name>Mg(2+)</name>
        <dbReference type="ChEBI" id="CHEBI:18420"/>
    </ligand>
</feature>
<feature type="binding site" evidence="1">
    <location>
        <position position="16"/>
    </location>
    <ligand>
        <name>ATP</name>
        <dbReference type="ChEBI" id="CHEBI:30616"/>
    </ligand>
</feature>
<feature type="binding site" evidence="1">
    <location>
        <position position="90"/>
    </location>
    <ligand>
        <name>substrate</name>
    </ligand>
</feature>
<feature type="binding site" evidence="1">
    <location>
        <begin position="207"/>
        <end position="211"/>
    </location>
    <ligand>
        <name>ATP</name>
        <dbReference type="ChEBI" id="CHEBI:30616"/>
    </ligand>
</feature>
<feature type="binding site" evidence="1">
    <location>
        <begin position="282"/>
        <end position="284"/>
    </location>
    <ligand>
        <name>ATP</name>
        <dbReference type="ChEBI" id="CHEBI:30616"/>
    </ligand>
</feature>
<feature type="binding site" evidence="1">
    <location>
        <begin position="330"/>
        <end position="334"/>
    </location>
    <ligand>
        <name>ATP</name>
        <dbReference type="ChEBI" id="CHEBI:30616"/>
    </ligand>
</feature>
<feature type="binding site" evidence="1">
    <location>
        <position position="384"/>
    </location>
    <ligand>
        <name>Mg(2+)</name>
        <dbReference type="ChEBI" id="CHEBI:18420"/>
    </ligand>
</feature>
<feature type="site" description="Transition state stabilizer" evidence="1">
    <location>
        <position position="179"/>
    </location>
</feature>
<feature type="site" description="Transition state stabilizer" evidence="1">
    <location>
        <position position="240"/>
    </location>
</feature>
<sequence length="398" mass="43837">MSSLVLAINAGSSSLKFQLIRMPEETLVTKGLIERIGIKDSIFTIEVNGEKIKDVKDIKDHEEAINIMLDSFKQHGIIDDINDIAGTGHRVVHGGELFPTSALVTDKVEEQIESLSELAPLHNPANLMGIRAFRKLLPNIPHVAVFDTSFHQSMPEQSYLYSLPYQYYKDYGIRKYGFHGTSHKYVSQRAAEIMNKPIEELRIISCHIGNGASIAAIDGGESIDTSMGFTPLAGVTMGTRSGNIDPALIPFIMQKTGQNAEEVLNVLNKESGLLGISGTSSDLRDLESDAEEGKERAQLALDVFASRIHKYIGSYATRMHGVDVIVFTAGVGENSSTVRAKVLEGLEFMGIYWDPKKNETIRGEEGFINYPHSPVKVIVIPTNEEVMIARDTVKFGEL</sequence>